<proteinExistence type="evidence at protein level"/>
<dbReference type="EC" id="5.6.2.2" evidence="1"/>
<dbReference type="EMBL" id="AJ297842">
    <property type="protein sequence ID" value="CAC24689.1"/>
    <property type="molecule type" value="mRNA"/>
</dbReference>
<dbReference type="EMBL" id="AF323679">
    <property type="protein sequence ID" value="AAL01152.1"/>
    <property type="molecule type" value="mRNA"/>
</dbReference>
<dbReference type="EMBL" id="AL162973">
    <property type="protein sequence ID" value="CAB86036.1"/>
    <property type="molecule type" value="Genomic_DNA"/>
</dbReference>
<dbReference type="EMBL" id="CP002688">
    <property type="protein sequence ID" value="AED90522.1"/>
    <property type="molecule type" value="Genomic_DNA"/>
</dbReference>
<dbReference type="EMBL" id="BT028966">
    <property type="protein sequence ID" value="ABI54341.1"/>
    <property type="molecule type" value="mRNA"/>
</dbReference>
<dbReference type="PIR" id="T48303">
    <property type="entry name" value="T48303"/>
</dbReference>
<dbReference type="RefSeq" id="NP_195902.1">
    <property type="nucleotide sequence ID" value="NM_120360.4"/>
</dbReference>
<dbReference type="SMR" id="Q9LZ03"/>
<dbReference type="BioGRID" id="16591">
    <property type="interactions" value="1"/>
</dbReference>
<dbReference type="DIP" id="DIP-40169N"/>
<dbReference type="FunCoup" id="Q9LZ03">
    <property type="interactions" value="937"/>
</dbReference>
<dbReference type="IntAct" id="Q9LZ03">
    <property type="interactions" value="3"/>
</dbReference>
<dbReference type="STRING" id="3702.Q9LZ03"/>
<dbReference type="PaxDb" id="3702-AT5G02820.1"/>
<dbReference type="ProteomicsDB" id="232433"/>
<dbReference type="EnsemblPlants" id="AT5G02820.1">
    <property type="protein sequence ID" value="AT5G02820.1"/>
    <property type="gene ID" value="AT5G02820"/>
</dbReference>
<dbReference type="GeneID" id="831314"/>
<dbReference type="Gramene" id="AT5G02820.1">
    <property type="protein sequence ID" value="AT5G02820.1"/>
    <property type="gene ID" value="AT5G02820"/>
</dbReference>
<dbReference type="KEGG" id="ath:AT5G02820"/>
<dbReference type="Araport" id="AT5G02820"/>
<dbReference type="TAIR" id="AT5G02820">
    <property type="gene designation" value="RHL2"/>
</dbReference>
<dbReference type="eggNOG" id="KOG2795">
    <property type="taxonomic scope" value="Eukaryota"/>
</dbReference>
<dbReference type="HOGENOM" id="CLU_037229_1_0_1"/>
<dbReference type="InParanoid" id="Q9LZ03"/>
<dbReference type="OMA" id="IETAGMF"/>
<dbReference type="PhylomeDB" id="Q9LZ03"/>
<dbReference type="CD-CODE" id="4299E36E">
    <property type="entry name" value="Nucleolus"/>
</dbReference>
<dbReference type="PRO" id="PR:Q9LZ03"/>
<dbReference type="Proteomes" id="UP000006548">
    <property type="component" value="Chromosome 5"/>
</dbReference>
<dbReference type="ExpressionAtlas" id="Q9LZ03">
    <property type="expression patterns" value="baseline and differential"/>
</dbReference>
<dbReference type="GO" id="GO:0005694">
    <property type="term" value="C:chromosome"/>
    <property type="evidence" value="ECO:0007669"/>
    <property type="project" value="InterPro"/>
</dbReference>
<dbReference type="GO" id="GO:0009330">
    <property type="term" value="C:DNA topoisomerase type II (double strand cut, ATP-hydrolyzing) complex"/>
    <property type="evidence" value="ECO:0007669"/>
    <property type="project" value="UniProtKB-UniRule"/>
</dbReference>
<dbReference type="GO" id="GO:0005634">
    <property type="term" value="C:nucleus"/>
    <property type="evidence" value="ECO:0000314"/>
    <property type="project" value="TAIR"/>
</dbReference>
<dbReference type="GO" id="GO:0005524">
    <property type="term" value="F:ATP binding"/>
    <property type="evidence" value="ECO:0007669"/>
    <property type="project" value="InterPro"/>
</dbReference>
<dbReference type="GO" id="GO:0003677">
    <property type="term" value="F:DNA binding"/>
    <property type="evidence" value="ECO:0007669"/>
    <property type="project" value="UniProtKB-UniRule"/>
</dbReference>
<dbReference type="GO" id="GO:0003918">
    <property type="term" value="F:DNA topoisomerase type II (double strand cut, ATP-hydrolyzing) activity"/>
    <property type="evidence" value="ECO:0000304"/>
    <property type="project" value="TAIR"/>
</dbReference>
<dbReference type="GO" id="GO:0042802">
    <property type="term" value="F:identical protein binding"/>
    <property type="evidence" value="ECO:0000353"/>
    <property type="project" value="IntAct"/>
</dbReference>
<dbReference type="GO" id="GO:0000287">
    <property type="term" value="F:magnesium ion binding"/>
    <property type="evidence" value="ECO:0007669"/>
    <property type="project" value="UniProtKB-UniRule"/>
</dbReference>
<dbReference type="GO" id="GO:0006265">
    <property type="term" value="P:DNA topological change"/>
    <property type="evidence" value="ECO:0007669"/>
    <property type="project" value="UniProtKB-UniRule"/>
</dbReference>
<dbReference type="GO" id="GO:0009957">
    <property type="term" value="P:epidermal cell fate specification"/>
    <property type="evidence" value="ECO:0000315"/>
    <property type="project" value="TAIR"/>
</dbReference>
<dbReference type="CDD" id="cd00223">
    <property type="entry name" value="TOPRIM_TopoIIB_SPO"/>
    <property type="match status" value="1"/>
</dbReference>
<dbReference type="FunFam" id="1.10.10.10:FF:000387">
    <property type="entry name" value="DNA topoisomerase 6 subunit A"/>
    <property type="match status" value="1"/>
</dbReference>
<dbReference type="FunFam" id="3.40.1360.10:FF:000003">
    <property type="entry name" value="DNA topoisomerase 6 subunit A"/>
    <property type="match status" value="1"/>
</dbReference>
<dbReference type="Gene3D" id="3.40.1360.10">
    <property type="match status" value="1"/>
</dbReference>
<dbReference type="Gene3D" id="1.10.10.10">
    <property type="entry name" value="Winged helix-like DNA-binding domain superfamily/Winged helix DNA-binding domain"/>
    <property type="match status" value="1"/>
</dbReference>
<dbReference type="HAMAP" id="MF_00132">
    <property type="entry name" value="Top6A"/>
    <property type="match status" value="1"/>
</dbReference>
<dbReference type="InterPro" id="IPR002815">
    <property type="entry name" value="Spo11/TopoVI_A"/>
</dbReference>
<dbReference type="InterPro" id="IPR013049">
    <property type="entry name" value="Spo11/TopoVI_A_N"/>
</dbReference>
<dbReference type="InterPro" id="IPR036078">
    <property type="entry name" value="Spo11/TopoVI_A_sf"/>
</dbReference>
<dbReference type="InterPro" id="IPR004085">
    <property type="entry name" value="TopoVI_A"/>
</dbReference>
<dbReference type="InterPro" id="IPR034136">
    <property type="entry name" value="TOPRIM_Topo6A/Spo11"/>
</dbReference>
<dbReference type="InterPro" id="IPR036388">
    <property type="entry name" value="WH-like_DNA-bd_sf"/>
</dbReference>
<dbReference type="PANTHER" id="PTHR10848:SF4">
    <property type="entry name" value="DNA TOPOISOMERASE 6 SUBUNIT A"/>
    <property type="match status" value="1"/>
</dbReference>
<dbReference type="PANTHER" id="PTHR10848">
    <property type="entry name" value="MEIOTIC RECOMBINATION PROTEIN SPO11"/>
    <property type="match status" value="1"/>
</dbReference>
<dbReference type="Pfam" id="PF21180">
    <property type="entry name" value="TOP6A-Spo11_Toprim"/>
    <property type="match status" value="1"/>
</dbReference>
<dbReference type="Pfam" id="PF04406">
    <property type="entry name" value="TP6A_N"/>
    <property type="match status" value="1"/>
</dbReference>
<dbReference type="PRINTS" id="PR01550">
    <property type="entry name" value="TOP6AFAMILY"/>
</dbReference>
<dbReference type="PRINTS" id="PR01552">
    <property type="entry name" value="TPISMRASE6A"/>
</dbReference>
<dbReference type="SUPFAM" id="SSF56726">
    <property type="entry name" value="DNA topoisomerase IV, alpha subunit"/>
    <property type="match status" value="1"/>
</dbReference>
<dbReference type="PROSITE" id="PS52041">
    <property type="entry name" value="TOPO_IIB"/>
    <property type="match status" value="1"/>
</dbReference>
<evidence type="ECO:0000255" key="1">
    <source>
        <dbReference type="HAMAP-Rule" id="MF_03164"/>
    </source>
</evidence>
<evidence type="ECO:0000255" key="2">
    <source>
        <dbReference type="PROSITE-ProRule" id="PRU01385"/>
    </source>
</evidence>
<evidence type="ECO:0000269" key="3">
    <source>
    </source>
</evidence>
<evidence type="ECO:0000269" key="4">
    <source>
    </source>
</evidence>
<evidence type="ECO:0000269" key="5">
    <source>
    </source>
</evidence>
<evidence type="ECO:0000269" key="6">
    <source>
    </source>
</evidence>
<evidence type="ECO:0000269" key="7">
    <source>
    </source>
</evidence>
<evidence type="ECO:0000269" key="8">
    <source>
    </source>
</evidence>
<keyword id="KW-0238">DNA-binding</keyword>
<keyword id="KW-0413">Isomerase</keyword>
<keyword id="KW-0460">Magnesium</keyword>
<keyword id="KW-0479">Metal-binding</keyword>
<keyword id="KW-0547">Nucleotide-binding</keyword>
<keyword id="KW-0539">Nucleus</keyword>
<keyword id="KW-1185">Reference proteome</keyword>
<keyword id="KW-0799">Topoisomerase</keyword>
<name>TOP6A_ARATH</name>
<gene>
    <name evidence="1" type="primary">TOP6A</name>
    <name type="synonym">BIN5</name>
    <name type="synonym">RHL2</name>
    <name type="synonym">SPO11-3</name>
    <name type="ordered locus">At5g02820</name>
    <name type="ORF">F9G14.130</name>
</gene>
<sequence>MADKKKRKRSKDDEAEELPFKSILESDDVITELLKSYISSSIKAAAGAGGASSSSSKPLTLADLSLSSSCREVADLSLSSVQTEIETVIVQIARSILAGDGFSFSVPSRAASNQLYVPELDRIVLKDKSTLRPFASVSSVRKTTITTRILALIHQLCLRNIHVTKRDLFYTDVKLFQDQTQSDAVLDDVSCMLGCTRSSLNVIAAEKGVVVGRLIFSDNGDMIDCTKMGMGGKAIPPNIDRVGDMQSDAMFILLVEKDAAYMRLAEDRFYNRFPCIIVTAKGQPDVATRLFLRKMKMELKLPVLALVDSDPYGLKILSVYGCGSKNMSYDSANLTTPDIKWLGIRPSDLDKYKIPEQCRLPMTEQDIKTGKDMLEEDFVKKNPGWVEELNLMVKTKQKAEIQALSSFGFQYLSEVYLPLKLQQQDWL</sequence>
<protein>
    <recommendedName>
        <fullName evidence="1">DNA topoisomerase 6 subunit A</fullName>
        <shortName>AtTOP6A</shortName>
        <ecNumber evidence="1">5.6.2.2</ecNumber>
    </recommendedName>
    <alternativeName>
        <fullName>Meiotic recombination protein SPO11-3</fullName>
        <shortName>AtSPO11-3</shortName>
    </alternativeName>
    <alternativeName>
        <fullName>Protein BRASSINOSTEROID INSENSITIVE 5</fullName>
    </alternativeName>
    <alternativeName>
        <fullName>Protein ROOT HAIRLESS 2</fullName>
    </alternativeName>
</protein>
<comment type="function">
    <text evidence="1 4 5">Component of the DNA topoisomerase VI involved in chromatin organization and progression of endoreduplication cycles. Relaxes both positive and negative superturns and exhibits a strong decatenase activity. Involved in cell-elongation processes.</text>
</comment>
<comment type="catalytic activity">
    <reaction evidence="1">
        <text>ATP-dependent breakage, passage and rejoining of double-stranded DNA.</text>
        <dbReference type="EC" id="5.6.2.2"/>
    </reaction>
</comment>
<comment type="cofactor">
    <cofactor evidence="1">
        <name>Mg(2+)</name>
        <dbReference type="ChEBI" id="CHEBI:18420"/>
    </cofactor>
</comment>
<comment type="subunit">
    <text evidence="1 3 6 7 8">Homodimer. Heterotetramer of two TOP6A and two TOP6B subunits. Interacts with BIN4 and RHL1.</text>
</comment>
<comment type="interaction">
    <interactant intactId="EBI-1772104">
        <id>Q9LZ03</id>
    </interactant>
    <interactant intactId="EBI-16200362">
        <id>Q5Q0E6</id>
        <label>MTOPVIB</label>
    </interactant>
    <organismsDiffer>false</organismsDiffer>
    <experiments>4</experiments>
</comment>
<comment type="interaction">
    <interactant intactId="EBI-1772104">
        <id>Q9LZ03</id>
    </interactant>
    <interactant intactId="EBI-1772159">
        <id>O81242</id>
        <label>RHL1</label>
    </interactant>
    <organismsDiffer>false</organismsDiffer>
    <experiments>2</experiments>
</comment>
<comment type="interaction">
    <interactant intactId="EBI-1772104">
        <id>Q9LZ03</id>
    </interactant>
    <interactant intactId="EBI-1772104">
        <id>Q9LZ03</id>
        <label>TOP6A</label>
    </interactant>
    <organismsDiffer>false</organismsDiffer>
    <experiments>3</experiments>
</comment>
<comment type="interaction">
    <interactant intactId="EBI-1772104">
        <id>Q9LZ03</id>
    </interactant>
    <interactant intactId="EBI-1772132">
        <id>Q9C5V6</id>
        <label>TOP6B</label>
    </interactant>
    <organismsDiffer>false</organismsDiffer>
    <experiments>7</experiments>
</comment>
<comment type="subcellular location">
    <subcellularLocation>
        <location evidence="1">Nucleus</location>
    </subcellularLocation>
</comment>
<comment type="tissue specificity">
    <text evidence="3">Highly expressed in leaves, stems, flowers and seedlings.</text>
</comment>
<comment type="disruption phenotype">
    <text evidence="5">Plants are defective in cell elongation and show a severe dwarf phenotype.</text>
</comment>
<comment type="similarity">
    <text evidence="1">Belongs to the TOP6A family.</text>
</comment>
<feature type="chain" id="PRO_0000346109" description="DNA topoisomerase 6 subunit A">
    <location>
        <begin position="1"/>
        <end position="427"/>
    </location>
</feature>
<feature type="domain" description="Topo IIA-type catalytic" evidence="2">
    <location>
        <begin position="76"/>
        <end position="209"/>
    </location>
</feature>
<feature type="active site" description="O-(5'-phospho-DNA)-tyrosine intermediate" evidence="2">
    <location>
        <position position="170"/>
    </location>
</feature>
<feature type="binding site" evidence="1">
    <location>
        <position position="256"/>
    </location>
    <ligand>
        <name>Mg(2+)</name>
        <dbReference type="ChEBI" id="CHEBI:18420"/>
    </ligand>
</feature>
<feature type="binding site" evidence="1">
    <location>
        <position position="308"/>
    </location>
    <ligand>
        <name>Mg(2+)</name>
        <dbReference type="ChEBI" id="CHEBI:18420"/>
    </ligand>
</feature>
<reference key="1">
    <citation type="journal article" date="2001" name="Gene">
        <title>Molecular characterization of homologues of both subunits A (SPO11) and B of the archaebacterial topoisomerase 6 in plants.</title>
        <authorList>
            <person name="Hartung F."/>
            <person name="Puchta H."/>
        </authorList>
    </citation>
    <scope>NUCLEOTIDE SEQUENCE [MRNA]</scope>
    <scope>TISSUE SPECIFICITY</scope>
    <scope>INTERACTION WITH TOP6B</scope>
</reference>
<reference key="2">
    <citation type="journal article" date="2001" name="EMBO J.">
        <title>AtSPO11-1 is necessary for efficient meiotic recombination in plants.</title>
        <authorList>
            <person name="Grelon M."/>
            <person name="Vezon D."/>
            <person name="Gendrot G."/>
            <person name="Pelletier G."/>
        </authorList>
    </citation>
    <scope>NUCLEOTIDE SEQUENCE [MRNA]</scope>
</reference>
<reference key="3">
    <citation type="journal article" date="2002" name="Curr. Biol.">
        <title>DNA topoisomerase VI is essential for endoreduplication in Arabidopsis.</title>
        <authorList>
            <person name="Sugimoto-Shirasu K."/>
            <person name="Stacey N.J."/>
            <person name="Corsar J."/>
            <person name="Roberts K."/>
            <person name="McCann M.C."/>
        </authorList>
    </citation>
    <scope>NUCLEOTIDE SEQUENCE [GENOMIC DNA]</scope>
    <scope>FUNCTION</scope>
    <scope>DISRUPTION PHENOTYPE</scope>
</reference>
<reference key="4">
    <citation type="journal article" date="2002" name="Proc. Natl. Acad. Sci. U.S.A.">
        <title>A crucial role for the putative Arabidopsis topoisomerase VI in plant growth and development.</title>
        <authorList>
            <person name="Yin Y."/>
            <person name="Cheong H."/>
            <person name="Friedrichsen D."/>
            <person name="Zhao Y."/>
            <person name="Hu J."/>
            <person name="Mora-Garcia S."/>
            <person name="Chory J."/>
        </authorList>
    </citation>
    <scope>NUCLEOTIDE SEQUENCE [GENOMIC DNA]</scope>
    <scope>FUNCTION</scope>
</reference>
<reference key="5">
    <citation type="journal article" date="2000" name="Nature">
        <title>Sequence and analysis of chromosome 5 of the plant Arabidopsis thaliana.</title>
        <authorList>
            <person name="Tabata S."/>
            <person name="Kaneko T."/>
            <person name="Nakamura Y."/>
            <person name="Kotani H."/>
            <person name="Kato T."/>
            <person name="Asamizu E."/>
            <person name="Miyajima N."/>
            <person name="Sasamoto S."/>
            <person name="Kimura T."/>
            <person name="Hosouchi T."/>
            <person name="Kawashima K."/>
            <person name="Kohara M."/>
            <person name="Matsumoto M."/>
            <person name="Matsuno A."/>
            <person name="Muraki A."/>
            <person name="Nakayama S."/>
            <person name="Nakazaki N."/>
            <person name="Naruo K."/>
            <person name="Okumura S."/>
            <person name="Shinpo S."/>
            <person name="Takeuchi C."/>
            <person name="Wada T."/>
            <person name="Watanabe A."/>
            <person name="Yamada M."/>
            <person name="Yasuda M."/>
            <person name="Sato S."/>
            <person name="de la Bastide M."/>
            <person name="Huang E."/>
            <person name="Spiegel L."/>
            <person name="Gnoj L."/>
            <person name="O'Shaughnessy A."/>
            <person name="Preston R."/>
            <person name="Habermann K."/>
            <person name="Murray J."/>
            <person name="Johnson D."/>
            <person name="Rohlfing T."/>
            <person name="Nelson J."/>
            <person name="Stoneking T."/>
            <person name="Pepin K."/>
            <person name="Spieth J."/>
            <person name="Sekhon M."/>
            <person name="Armstrong J."/>
            <person name="Becker M."/>
            <person name="Belter E."/>
            <person name="Cordum H."/>
            <person name="Cordes M."/>
            <person name="Courtney L."/>
            <person name="Courtney W."/>
            <person name="Dante M."/>
            <person name="Du H."/>
            <person name="Edwards J."/>
            <person name="Fryman J."/>
            <person name="Haakensen B."/>
            <person name="Lamar E."/>
            <person name="Latreille P."/>
            <person name="Leonard S."/>
            <person name="Meyer R."/>
            <person name="Mulvaney E."/>
            <person name="Ozersky P."/>
            <person name="Riley A."/>
            <person name="Strowmatt C."/>
            <person name="Wagner-McPherson C."/>
            <person name="Wollam A."/>
            <person name="Yoakum M."/>
            <person name="Bell M."/>
            <person name="Dedhia N."/>
            <person name="Parnell L."/>
            <person name="Shah R."/>
            <person name="Rodriguez M."/>
            <person name="Hoon See L."/>
            <person name="Vil D."/>
            <person name="Baker J."/>
            <person name="Kirchoff K."/>
            <person name="Toth K."/>
            <person name="King L."/>
            <person name="Bahret A."/>
            <person name="Miller B."/>
            <person name="Marra M.A."/>
            <person name="Martienssen R."/>
            <person name="McCombie W.R."/>
            <person name="Wilson R.K."/>
            <person name="Murphy G."/>
            <person name="Bancroft I."/>
            <person name="Volckaert G."/>
            <person name="Wambutt R."/>
            <person name="Duesterhoeft A."/>
            <person name="Stiekema W."/>
            <person name="Pohl T."/>
            <person name="Entian K.-D."/>
            <person name="Terryn N."/>
            <person name="Hartley N."/>
            <person name="Bent E."/>
            <person name="Johnson S."/>
            <person name="Langham S.-A."/>
            <person name="McCullagh B."/>
            <person name="Robben J."/>
            <person name="Grymonprez B."/>
            <person name="Zimmermann W."/>
            <person name="Ramsperger U."/>
            <person name="Wedler H."/>
            <person name="Balke K."/>
            <person name="Wedler E."/>
            <person name="Peters S."/>
            <person name="van Staveren M."/>
            <person name="Dirkse W."/>
            <person name="Mooijman P."/>
            <person name="Klein Lankhorst R."/>
            <person name="Weitzenegger T."/>
            <person name="Bothe G."/>
            <person name="Rose M."/>
            <person name="Hauf J."/>
            <person name="Berneiser S."/>
            <person name="Hempel S."/>
            <person name="Feldpausch M."/>
            <person name="Lamberth S."/>
            <person name="Villarroel R."/>
            <person name="Gielen J."/>
            <person name="Ardiles W."/>
            <person name="Bents O."/>
            <person name="Lemcke K."/>
            <person name="Kolesov G."/>
            <person name="Mayer K.F.X."/>
            <person name="Rudd S."/>
            <person name="Schoof H."/>
            <person name="Schueller C."/>
            <person name="Zaccaria P."/>
            <person name="Mewes H.-W."/>
            <person name="Bevan M."/>
            <person name="Fransz P.F."/>
        </authorList>
    </citation>
    <scope>NUCLEOTIDE SEQUENCE [LARGE SCALE GENOMIC DNA]</scope>
    <source>
        <strain>cv. Columbia</strain>
    </source>
</reference>
<reference key="6">
    <citation type="journal article" date="2017" name="Plant J.">
        <title>Araport11: a complete reannotation of the Arabidopsis thaliana reference genome.</title>
        <authorList>
            <person name="Cheng C.Y."/>
            <person name="Krishnakumar V."/>
            <person name="Chan A.P."/>
            <person name="Thibaud-Nissen F."/>
            <person name="Schobel S."/>
            <person name="Town C.D."/>
        </authorList>
    </citation>
    <scope>GENOME REANNOTATION</scope>
    <source>
        <strain>cv. Columbia</strain>
    </source>
</reference>
<reference key="7">
    <citation type="submission" date="2006-09" db="EMBL/GenBank/DDBJ databases">
        <title>Arabidopsis ORF clones.</title>
        <authorList>
            <person name="Bautista V.R."/>
            <person name="Kim C.J."/>
            <person name="Chen H."/>
            <person name="Quinitio C."/>
            <person name="Ecker J.R."/>
        </authorList>
    </citation>
    <scope>NUCLEOTIDE SEQUENCE [LARGE SCALE MRNA]</scope>
    <source>
        <strain>cv. Columbia</strain>
    </source>
</reference>
<reference key="8">
    <citation type="journal article" date="2005" name="Proc. Natl. Acad. Sci. U.S.A.">
        <title>RHL1 is an essential component of the plant DNA topoisomerase VI complex and is required for ploidy-dependent cell growth.</title>
        <authorList>
            <person name="Sugimoto-Shirasu K."/>
            <person name="Roberts G.R."/>
            <person name="Stacey N.J."/>
            <person name="McCann M.C."/>
            <person name="Maxwell A."/>
            <person name="Roberts K."/>
        </authorList>
    </citation>
    <scope>INTERACTION WITH RHL1</scope>
</reference>
<reference key="9">
    <citation type="journal article" date="2007" name="Plant Cell">
        <title>BIN4, a novel component of the plant DNA topoisomerase VI complex, is required for endoreduplication in Arabidopsis.</title>
        <authorList>
            <person name="Breuer C."/>
            <person name="Stacey N.J."/>
            <person name="West C.E."/>
            <person name="Zhao Y."/>
            <person name="Chory J."/>
            <person name="Tsukaya H."/>
            <person name="Azumi Y."/>
            <person name="Maxwell A."/>
            <person name="Roberts K."/>
            <person name="Sugimoto-Shirasu K."/>
        </authorList>
    </citation>
    <scope>INTERACTION WITH BIN4</scope>
</reference>
<reference key="10">
    <citation type="journal article" date="2007" name="Plant Cell">
        <title>MIDGET unravels functions of the Arabidopsis topoisomerase VI complex in DNA endoreduplication, chromatin condensation, and transcriptional silencing.</title>
        <authorList>
            <person name="Kirik V."/>
            <person name="Schrader A."/>
            <person name="Uhrig J.F."/>
            <person name="Hulskamp M."/>
        </authorList>
    </citation>
    <scope>INTERACTION WITH RHL1</scope>
</reference>
<organism>
    <name type="scientific">Arabidopsis thaliana</name>
    <name type="common">Mouse-ear cress</name>
    <dbReference type="NCBI Taxonomy" id="3702"/>
    <lineage>
        <taxon>Eukaryota</taxon>
        <taxon>Viridiplantae</taxon>
        <taxon>Streptophyta</taxon>
        <taxon>Embryophyta</taxon>
        <taxon>Tracheophyta</taxon>
        <taxon>Spermatophyta</taxon>
        <taxon>Magnoliopsida</taxon>
        <taxon>eudicotyledons</taxon>
        <taxon>Gunneridae</taxon>
        <taxon>Pentapetalae</taxon>
        <taxon>rosids</taxon>
        <taxon>malvids</taxon>
        <taxon>Brassicales</taxon>
        <taxon>Brassicaceae</taxon>
        <taxon>Camelineae</taxon>
        <taxon>Arabidopsis</taxon>
    </lineage>
</organism>
<accession>Q9LZ03</accession>